<gene>
    <name type="primary">pseF</name>
    <name type="synonym">neuA</name>
    <name type="ordered locus">CJJ81176_1328</name>
</gene>
<reference key="1">
    <citation type="journal article" date="2001" name="J. Biol. Chem.">
        <title>Identification of the carbohydrate moieties and glycosylation motifs in Campylobacter jejuni flagellin.</title>
        <authorList>
            <person name="Thibault P."/>
            <person name="Logan S.M."/>
            <person name="Kelly J.F."/>
            <person name="Brisson J.-R."/>
            <person name="Ewing C.P."/>
            <person name="Trust T.J."/>
            <person name="Guerry P."/>
        </authorList>
    </citation>
    <scope>NUCLEOTIDE SEQUENCE [GENOMIC DNA]</scope>
    <source>
        <strain>81-176</strain>
    </source>
</reference>
<reference key="2">
    <citation type="submission" date="2006-12" db="EMBL/GenBank/DDBJ databases">
        <authorList>
            <person name="Fouts D.E."/>
            <person name="Nelson K.E."/>
            <person name="Sebastian Y."/>
        </authorList>
    </citation>
    <scope>NUCLEOTIDE SEQUENCE [LARGE SCALE GENOMIC DNA]</scope>
    <source>
        <strain>81-176</strain>
    </source>
</reference>
<reference key="3">
    <citation type="journal article" date="2006" name="J. Biol. Chem.">
        <title>Functional characterization of the flagellar glycosylation locus in Campylobacter jejuni 81-176 using a focused metabolomics approach.</title>
        <authorList>
            <person name="McNally D.J."/>
            <person name="Hui J.P."/>
            <person name="Aubry A.J."/>
            <person name="Mui K.K."/>
            <person name="Guerry P."/>
            <person name="Brisson J.R."/>
            <person name="Logan S.M."/>
            <person name="Soo E.C."/>
        </authorList>
    </citation>
    <scope>IDENTIFICATION</scope>
    <source>
        <strain>81-176</strain>
    </source>
</reference>
<comment type="function">
    <text evidence="1">Catalyzes the final step in the biosynthesis of pseudaminic acid, a sialic-acid-like sugar that is used to modify flagellin. Mediates the activation of pseudaminic acid with CMP by forming CMP-pseudaminic acid (By similarity).</text>
</comment>
<comment type="catalytic activity">
    <reaction>
        <text>pseudaminate + CTP = CMP-pseudaminate + diphosphate</text>
        <dbReference type="Rhea" id="RHEA:32083"/>
        <dbReference type="ChEBI" id="CHEBI:33019"/>
        <dbReference type="ChEBI" id="CHEBI:37563"/>
        <dbReference type="ChEBI" id="CHEBI:63282"/>
        <dbReference type="ChEBI" id="CHEBI:63680"/>
        <dbReference type="EC" id="2.7.7.81"/>
    </reaction>
</comment>
<comment type="cofactor">
    <cofactor evidence="1">
        <name>Mg(2+)</name>
        <dbReference type="ChEBI" id="CHEBI:18420"/>
    </cofactor>
</comment>
<comment type="similarity">
    <text evidence="2">Belongs to the CMP-NeuNAc synthase family.</text>
</comment>
<evidence type="ECO:0000250" key="1"/>
<evidence type="ECO:0000305" key="2"/>
<keyword id="KW-0460">Magnesium</keyword>
<keyword id="KW-0479">Metal-binding</keyword>
<keyword id="KW-0548">Nucleotidyltransferase</keyword>
<keyword id="KW-0808">Transferase</keyword>
<organism>
    <name type="scientific">Campylobacter jejuni subsp. jejuni serotype O:23/36 (strain 81-176)</name>
    <dbReference type="NCBI Taxonomy" id="354242"/>
    <lineage>
        <taxon>Bacteria</taxon>
        <taxon>Pseudomonadati</taxon>
        <taxon>Campylobacterota</taxon>
        <taxon>Epsilonproteobacteria</taxon>
        <taxon>Campylobacterales</taxon>
        <taxon>Campylobacteraceae</taxon>
        <taxon>Campylobacter</taxon>
    </lineage>
</organism>
<feature type="chain" id="PRO_0000418938" description="Pseudaminic acid cytidylyltransferase">
    <location>
        <begin position="1"/>
        <end position="232"/>
    </location>
</feature>
<accession>Q2M5Q2</accession>
<protein>
    <recommendedName>
        <fullName>Pseudaminic acid cytidylyltransferase</fullName>
        <ecNumber>2.7.7.81</ecNumber>
    </recommendedName>
    <alternativeName>
        <fullName>Pseudaminic acid biosynthesis protein F</fullName>
    </alternativeName>
</protein>
<dbReference type="EC" id="2.7.7.81"/>
<dbReference type="EMBL" id="AY102622">
    <property type="protein sequence ID" value="ABC69287.1"/>
    <property type="molecule type" value="Genomic_DNA"/>
</dbReference>
<dbReference type="EMBL" id="CP000538">
    <property type="protein sequence ID" value="EAQ72623.1"/>
    <property type="molecule type" value="Genomic_DNA"/>
</dbReference>
<dbReference type="RefSeq" id="WP_002869384.1">
    <property type="nucleotide sequence ID" value="NC_008787.1"/>
</dbReference>
<dbReference type="SMR" id="Q2M5Q2"/>
<dbReference type="KEGG" id="cjj:CJJ81176_1328"/>
<dbReference type="eggNOG" id="COG1083">
    <property type="taxonomic scope" value="Bacteria"/>
</dbReference>
<dbReference type="HOGENOM" id="CLU_042930_1_0_7"/>
<dbReference type="Proteomes" id="UP000000646">
    <property type="component" value="Chromosome"/>
</dbReference>
<dbReference type="GO" id="GO:0046872">
    <property type="term" value="F:metal ion binding"/>
    <property type="evidence" value="ECO:0007669"/>
    <property type="project" value="UniProtKB-KW"/>
</dbReference>
<dbReference type="GO" id="GO:0008781">
    <property type="term" value="F:N-acylneuraminate cytidylyltransferase activity"/>
    <property type="evidence" value="ECO:0007669"/>
    <property type="project" value="TreeGrafter"/>
</dbReference>
<dbReference type="CDD" id="cd02513">
    <property type="entry name" value="CMP-NeuAc_Synthase"/>
    <property type="match status" value="1"/>
</dbReference>
<dbReference type="Gene3D" id="3.90.550.10">
    <property type="entry name" value="Spore Coat Polysaccharide Biosynthesis Protein SpsA, Chain A"/>
    <property type="match status" value="1"/>
</dbReference>
<dbReference type="InterPro" id="IPR050793">
    <property type="entry name" value="CMP-NeuNAc_synthase"/>
</dbReference>
<dbReference type="InterPro" id="IPR003329">
    <property type="entry name" value="Cytidylyl_trans"/>
</dbReference>
<dbReference type="InterPro" id="IPR029044">
    <property type="entry name" value="Nucleotide-diphossugar_trans"/>
</dbReference>
<dbReference type="InterPro" id="IPR020039">
    <property type="entry name" value="PseF"/>
</dbReference>
<dbReference type="NCBIfam" id="TIGR03584">
    <property type="entry name" value="PseF"/>
    <property type="match status" value="1"/>
</dbReference>
<dbReference type="PANTHER" id="PTHR21485">
    <property type="entry name" value="HAD SUPERFAMILY MEMBERS CMAS AND KDSC"/>
    <property type="match status" value="1"/>
</dbReference>
<dbReference type="PANTHER" id="PTHR21485:SF6">
    <property type="entry name" value="N-ACYLNEURAMINATE CYTIDYLYLTRANSFERASE-RELATED"/>
    <property type="match status" value="1"/>
</dbReference>
<dbReference type="Pfam" id="PF02348">
    <property type="entry name" value="CTP_transf_3"/>
    <property type="match status" value="1"/>
</dbReference>
<dbReference type="SUPFAM" id="SSF53448">
    <property type="entry name" value="Nucleotide-diphospho-sugar transferases"/>
    <property type="match status" value="1"/>
</dbReference>
<proteinExistence type="inferred from homology"/>
<name>PSEF_CAMJJ</name>
<sequence>MKNLCIIPARGGSKRIPRKNIIDFLGKPLIAYSIENALNSGIFDEIVLSSDDEEIIEVALKYGAKAPFVRDKNLSDDYASSTAAVQNAIEILQSQNQIYDHVCCLYATAPLLNKNILKQAYEKFIQNQSKFLFAATEFEYPIQRAFYLNENNQVYMFDEKHYKSRSQDLTKAYHDAGAFYFGTSKAWLEEDFIFKPHSSVFVLPRNLVCDIDTMQDLEFAKILYKVNHESAF</sequence>